<comment type="function">
    <text evidence="1">Catalyzes the interconversion of L-alanine and D-alanine. May also act on other amino acids.</text>
</comment>
<comment type="catalytic activity">
    <reaction evidence="1">
        <text>L-alanine = D-alanine</text>
        <dbReference type="Rhea" id="RHEA:20249"/>
        <dbReference type="ChEBI" id="CHEBI:57416"/>
        <dbReference type="ChEBI" id="CHEBI:57972"/>
        <dbReference type="EC" id="5.1.1.1"/>
    </reaction>
</comment>
<comment type="cofactor">
    <cofactor evidence="1">
        <name>pyridoxal 5'-phosphate</name>
        <dbReference type="ChEBI" id="CHEBI:597326"/>
    </cofactor>
</comment>
<comment type="pathway">
    <text evidence="1">Amino-acid biosynthesis; D-alanine biosynthesis; D-alanine from L-alanine: step 1/1.</text>
</comment>
<comment type="similarity">
    <text evidence="1">Belongs to the alanine racemase family.</text>
</comment>
<evidence type="ECO:0000255" key="1">
    <source>
        <dbReference type="HAMAP-Rule" id="MF_01201"/>
    </source>
</evidence>
<organism>
    <name type="scientific">Deinococcus geothermalis (strain DSM 11300 / CIP 105573 / AG-3a)</name>
    <dbReference type="NCBI Taxonomy" id="319795"/>
    <lineage>
        <taxon>Bacteria</taxon>
        <taxon>Thermotogati</taxon>
        <taxon>Deinococcota</taxon>
        <taxon>Deinococci</taxon>
        <taxon>Deinococcales</taxon>
        <taxon>Deinococcaceae</taxon>
        <taxon>Deinococcus</taxon>
    </lineage>
</organism>
<protein>
    <recommendedName>
        <fullName evidence="1">Alanine racemase</fullName>
        <ecNumber evidence="1">5.1.1.1</ecNumber>
    </recommendedName>
</protein>
<gene>
    <name type="primary">alr</name>
    <name type="ordered locus">Dgeo_1380</name>
</gene>
<accession>Q1IYK9</accession>
<keyword id="KW-0413">Isomerase</keyword>
<keyword id="KW-0663">Pyridoxal phosphate</keyword>
<name>ALR_DEIGD</name>
<reference key="1">
    <citation type="submission" date="2006-04" db="EMBL/GenBank/DDBJ databases">
        <title>Complete sequence of chromosome of Deinococcus geothermalis DSM 11300.</title>
        <authorList>
            <person name="Copeland A."/>
            <person name="Lucas S."/>
            <person name="Lapidus A."/>
            <person name="Barry K."/>
            <person name="Detter J.C."/>
            <person name="Glavina del Rio T."/>
            <person name="Hammon N."/>
            <person name="Israni S."/>
            <person name="Dalin E."/>
            <person name="Tice H."/>
            <person name="Pitluck S."/>
            <person name="Brettin T."/>
            <person name="Bruce D."/>
            <person name="Han C."/>
            <person name="Tapia R."/>
            <person name="Saunders E."/>
            <person name="Gilna P."/>
            <person name="Schmutz J."/>
            <person name="Larimer F."/>
            <person name="Land M."/>
            <person name="Hauser L."/>
            <person name="Kyrpides N."/>
            <person name="Kim E."/>
            <person name="Daly M.J."/>
            <person name="Fredrickson J.K."/>
            <person name="Makarova K.S."/>
            <person name="Gaidamakova E.K."/>
            <person name="Zhai M."/>
            <person name="Richardson P."/>
        </authorList>
    </citation>
    <scope>NUCLEOTIDE SEQUENCE [LARGE SCALE GENOMIC DNA]</scope>
    <source>
        <strain>DSM 11300 / CIP 105573 / AG-3a</strain>
    </source>
</reference>
<sequence>MQEMQARAQALISESALRSNLTALARQAGTQLLLPVKADAYGHGMEIVARLAARHPAVWGFAVAVPREAATLAALGLGKPILLLTPPTLEEMGPLADLGVRLPVASLAEAEALPAHARAHLKVDTGMNRLGARPEEAVRVGQRLAERGLLEGAYTHFATADEPDLSFARQQFARFQEVLAALPPVLAHAANGGGVLSFGPLPSLSLARPGLASYGFAPAHLRGVAPLTPVMTLQARVTHVHAVYPGESVSYGGLWRATRKTIVATVGIGYADGYPRNATGKACVLVRGECRPVLGRICMDQCMVDVTDLEVRVGDWVEVWGTDKITVTDVAAWGGTVEYEVLTGLGARVERVAAG</sequence>
<feature type="chain" id="PRO_1000065986" description="Alanine racemase">
    <location>
        <begin position="1"/>
        <end position="355"/>
    </location>
</feature>
<feature type="active site" description="Proton acceptor; specific for D-alanine" evidence="1">
    <location>
        <position position="37"/>
    </location>
</feature>
<feature type="active site" description="Proton acceptor; specific for L-alanine" evidence="1">
    <location>
        <position position="251"/>
    </location>
</feature>
<feature type="binding site" evidence="1">
    <location>
        <position position="129"/>
    </location>
    <ligand>
        <name>substrate</name>
    </ligand>
</feature>
<feature type="binding site" evidence="1">
    <location>
        <position position="299"/>
    </location>
    <ligand>
        <name>substrate</name>
    </ligand>
</feature>
<feature type="modified residue" description="N6-(pyridoxal phosphate)lysine" evidence="1">
    <location>
        <position position="37"/>
    </location>
</feature>
<dbReference type="EC" id="5.1.1.1" evidence="1"/>
<dbReference type="EMBL" id="CP000359">
    <property type="protein sequence ID" value="ABF45675.1"/>
    <property type="molecule type" value="Genomic_DNA"/>
</dbReference>
<dbReference type="SMR" id="Q1IYK9"/>
<dbReference type="STRING" id="319795.Dgeo_1380"/>
<dbReference type="KEGG" id="dge:Dgeo_1380"/>
<dbReference type="eggNOG" id="COG0787">
    <property type="taxonomic scope" value="Bacteria"/>
</dbReference>
<dbReference type="HOGENOM" id="CLU_028393_2_2_0"/>
<dbReference type="UniPathway" id="UPA00042">
    <property type="reaction ID" value="UER00497"/>
</dbReference>
<dbReference type="Proteomes" id="UP000002431">
    <property type="component" value="Chromosome"/>
</dbReference>
<dbReference type="GO" id="GO:0005829">
    <property type="term" value="C:cytosol"/>
    <property type="evidence" value="ECO:0007669"/>
    <property type="project" value="TreeGrafter"/>
</dbReference>
<dbReference type="GO" id="GO:0008784">
    <property type="term" value="F:alanine racemase activity"/>
    <property type="evidence" value="ECO:0007669"/>
    <property type="project" value="UniProtKB-UniRule"/>
</dbReference>
<dbReference type="GO" id="GO:0030170">
    <property type="term" value="F:pyridoxal phosphate binding"/>
    <property type="evidence" value="ECO:0007669"/>
    <property type="project" value="UniProtKB-UniRule"/>
</dbReference>
<dbReference type="GO" id="GO:0030632">
    <property type="term" value="P:D-alanine biosynthetic process"/>
    <property type="evidence" value="ECO:0007669"/>
    <property type="project" value="UniProtKB-UniRule"/>
</dbReference>
<dbReference type="CDD" id="cd00430">
    <property type="entry name" value="PLPDE_III_AR"/>
    <property type="match status" value="1"/>
</dbReference>
<dbReference type="Gene3D" id="3.20.20.10">
    <property type="entry name" value="Alanine racemase"/>
    <property type="match status" value="1"/>
</dbReference>
<dbReference type="Gene3D" id="2.40.37.10">
    <property type="entry name" value="Lyase, Ornithine Decarboxylase, Chain A, domain 1"/>
    <property type="match status" value="1"/>
</dbReference>
<dbReference type="HAMAP" id="MF_01201">
    <property type="entry name" value="Ala_racemase"/>
    <property type="match status" value="1"/>
</dbReference>
<dbReference type="InterPro" id="IPR000821">
    <property type="entry name" value="Ala_racemase"/>
</dbReference>
<dbReference type="InterPro" id="IPR009006">
    <property type="entry name" value="Ala_racemase/Decarboxylase_C"/>
</dbReference>
<dbReference type="InterPro" id="IPR011079">
    <property type="entry name" value="Ala_racemase_C"/>
</dbReference>
<dbReference type="InterPro" id="IPR001608">
    <property type="entry name" value="Ala_racemase_N"/>
</dbReference>
<dbReference type="InterPro" id="IPR020622">
    <property type="entry name" value="Ala_racemase_pyridoxalP-BS"/>
</dbReference>
<dbReference type="InterPro" id="IPR029066">
    <property type="entry name" value="PLP-binding_barrel"/>
</dbReference>
<dbReference type="NCBIfam" id="TIGR00492">
    <property type="entry name" value="alr"/>
    <property type="match status" value="1"/>
</dbReference>
<dbReference type="PANTHER" id="PTHR30511">
    <property type="entry name" value="ALANINE RACEMASE"/>
    <property type="match status" value="1"/>
</dbReference>
<dbReference type="PANTHER" id="PTHR30511:SF0">
    <property type="entry name" value="ALANINE RACEMASE, CATABOLIC-RELATED"/>
    <property type="match status" value="1"/>
</dbReference>
<dbReference type="Pfam" id="PF00842">
    <property type="entry name" value="Ala_racemase_C"/>
    <property type="match status" value="1"/>
</dbReference>
<dbReference type="Pfam" id="PF01168">
    <property type="entry name" value="Ala_racemase_N"/>
    <property type="match status" value="1"/>
</dbReference>
<dbReference type="PRINTS" id="PR00992">
    <property type="entry name" value="ALARACEMASE"/>
</dbReference>
<dbReference type="SMART" id="SM01005">
    <property type="entry name" value="Ala_racemase_C"/>
    <property type="match status" value="1"/>
</dbReference>
<dbReference type="SUPFAM" id="SSF50621">
    <property type="entry name" value="Alanine racemase C-terminal domain-like"/>
    <property type="match status" value="1"/>
</dbReference>
<dbReference type="SUPFAM" id="SSF51419">
    <property type="entry name" value="PLP-binding barrel"/>
    <property type="match status" value="1"/>
</dbReference>
<dbReference type="PROSITE" id="PS00395">
    <property type="entry name" value="ALANINE_RACEMASE"/>
    <property type="match status" value="1"/>
</dbReference>
<proteinExistence type="inferred from homology"/>